<feature type="chain" id="PRO_0000165545" description="Holliday junction branch migration complex subunit RuvB">
    <location>
        <begin position="1"/>
        <end position="336"/>
    </location>
</feature>
<feature type="region of interest" description="Large ATPase domain (RuvB-L)" evidence="1">
    <location>
        <begin position="4"/>
        <end position="184"/>
    </location>
</feature>
<feature type="region of interest" description="Small ATPAse domain (RuvB-S)" evidence="1">
    <location>
        <begin position="185"/>
        <end position="255"/>
    </location>
</feature>
<feature type="region of interest" description="Head domain (RuvB-H)" evidence="1">
    <location>
        <begin position="258"/>
        <end position="336"/>
    </location>
</feature>
<feature type="binding site" evidence="1">
    <location>
        <position position="23"/>
    </location>
    <ligand>
        <name>ATP</name>
        <dbReference type="ChEBI" id="CHEBI:30616"/>
    </ligand>
</feature>
<feature type="binding site" evidence="1">
    <location>
        <position position="24"/>
    </location>
    <ligand>
        <name>ATP</name>
        <dbReference type="ChEBI" id="CHEBI:30616"/>
    </ligand>
</feature>
<feature type="binding site" evidence="1">
    <location>
        <position position="65"/>
    </location>
    <ligand>
        <name>ATP</name>
        <dbReference type="ChEBI" id="CHEBI:30616"/>
    </ligand>
</feature>
<feature type="binding site" evidence="1">
    <location>
        <position position="68"/>
    </location>
    <ligand>
        <name>ATP</name>
        <dbReference type="ChEBI" id="CHEBI:30616"/>
    </ligand>
</feature>
<feature type="binding site" evidence="1">
    <location>
        <position position="69"/>
    </location>
    <ligand>
        <name>ATP</name>
        <dbReference type="ChEBI" id="CHEBI:30616"/>
    </ligand>
</feature>
<feature type="binding site" evidence="1">
    <location>
        <position position="69"/>
    </location>
    <ligand>
        <name>Mg(2+)</name>
        <dbReference type="ChEBI" id="CHEBI:18420"/>
    </ligand>
</feature>
<feature type="binding site" evidence="1">
    <location>
        <position position="70"/>
    </location>
    <ligand>
        <name>ATP</name>
        <dbReference type="ChEBI" id="CHEBI:30616"/>
    </ligand>
</feature>
<feature type="binding site" evidence="1">
    <location>
        <begin position="131"/>
        <end position="133"/>
    </location>
    <ligand>
        <name>ATP</name>
        <dbReference type="ChEBI" id="CHEBI:30616"/>
    </ligand>
</feature>
<feature type="binding site" evidence="1">
    <location>
        <position position="174"/>
    </location>
    <ligand>
        <name>ATP</name>
        <dbReference type="ChEBI" id="CHEBI:30616"/>
    </ligand>
</feature>
<feature type="binding site" evidence="1">
    <location>
        <position position="184"/>
    </location>
    <ligand>
        <name>ATP</name>
        <dbReference type="ChEBI" id="CHEBI:30616"/>
    </ligand>
</feature>
<feature type="binding site" evidence="1">
    <location>
        <position position="221"/>
    </location>
    <ligand>
        <name>ATP</name>
        <dbReference type="ChEBI" id="CHEBI:30616"/>
    </ligand>
</feature>
<feature type="binding site" evidence="1">
    <location>
        <position position="313"/>
    </location>
    <ligand>
        <name>DNA</name>
        <dbReference type="ChEBI" id="CHEBI:16991"/>
    </ligand>
</feature>
<feature type="binding site" evidence="1">
    <location>
        <position position="318"/>
    </location>
    <ligand>
        <name>DNA</name>
        <dbReference type="ChEBI" id="CHEBI:16991"/>
    </ligand>
</feature>
<gene>
    <name evidence="1" type="primary">ruvB</name>
    <name type="ordered locus">lpp1534</name>
</gene>
<accession>Q5X4Y6</accession>
<protein>
    <recommendedName>
        <fullName evidence="1">Holliday junction branch migration complex subunit RuvB</fullName>
        <ecNumber evidence="1">3.6.4.-</ecNumber>
    </recommendedName>
</protein>
<organism>
    <name type="scientific">Legionella pneumophila (strain Paris)</name>
    <dbReference type="NCBI Taxonomy" id="297246"/>
    <lineage>
        <taxon>Bacteria</taxon>
        <taxon>Pseudomonadati</taxon>
        <taxon>Pseudomonadota</taxon>
        <taxon>Gammaproteobacteria</taxon>
        <taxon>Legionellales</taxon>
        <taxon>Legionellaceae</taxon>
        <taxon>Legionella</taxon>
    </lineage>
</organism>
<dbReference type="EC" id="3.6.4.-" evidence="1"/>
<dbReference type="EMBL" id="CR628336">
    <property type="protein sequence ID" value="CAH12685.1"/>
    <property type="molecule type" value="Genomic_DNA"/>
</dbReference>
<dbReference type="RefSeq" id="WP_011213854.1">
    <property type="nucleotide sequence ID" value="NC_006368.1"/>
</dbReference>
<dbReference type="SMR" id="Q5X4Y6"/>
<dbReference type="KEGG" id="lpp:lpp1534"/>
<dbReference type="LegioList" id="lpp1534"/>
<dbReference type="HOGENOM" id="CLU_055599_1_0_6"/>
<dbReference type="GO" id="GO:0005737">
    <property type="term" value="C:cytoplasm"/>
    <property type="evidence" value="ECO:0007669"/>
    <property type="project" value="UniProtKB-SubCell"/>
</dbReference>
<dbReference type="GO" id="GO:0048476">
    <property type="term" value="C:Holliday junction resolvase complex"/>
    <property type="evidence" value="ECO:0007669"/>
    <property type="project" value="UniProtKB-UniRule"/>
</dbReference>
<dbReference type="GO" id="GO:0005524">
    <property type="term" value="F:ATP binding"/>
    <property type="evidence" value="ECO:0007669"/>
    <property type="project" value="UniProtKB-UniRule"/>
</dbReference>
<dbReference type="GO" id="GO:0016887">
    <property type="term" value="F:ATP hydrolysis activity"/>
    <property type="evidence" value="ECO:0007669"/>
    <property type="project" value="InterPro"/>
</dbReference>
<dbReference type="GO" id="GO:0000400">
    <property type="term" value="F:four-way junction DNA binding"/>
    <property type="evidence" value="ECO:0007669"/>
    <property type="project" value="UniProtKB-UniRule"/>
</dbReference>
<dbReference type="GO" id="GO:0009378">
    <property type="term" value="F:four-way junction helicase activity"/>
    <property type="evidence" value="ECO:0007669"/>
    <property type="project" value="InterPro"/>
</dbReference>
<dbReference type="GO" id="GO:0006310">
    <property type="term" value="P:DNA recombination"/>
    <property type="evidence" value="ECO:0007669"/>
    <property type="project" value="UniProtKB-UniRule"/>
</dbReference>
<dbReference type="GO" id="GO:0006281">
    <property type="term" value="P:DNA repair"/>
    <property type="evidence" value="ECO:0007669"/>
    <property type="project" value="UniProtKB-UniRule"/>
</dbReference>
<dbReference type="CDD" id="cd00009">
    <property type="entry name" value="AAA"/>
    <property type="match status" value="1"/>
</dbReference>
<dbReference type="FunFam" id="1.10.10.10:FF:000086">
    <property type="entry name" value="Holliday junction ATP-dependent DNA helicase RuvB"/>
    <property type="match status" value="1"/>
</dbReference>
<dbReference type="FunFam" id="3.40.50.300:FF:000073">
    <property type="entry name" value="Holliday junction ATP-dependent DNA helicase RuvB"/>
    <property type="match status" value="1"/>
</dbReference>
<dbReference type="Gene3D" id="1.10.8.60">
    <property type="match status" value="1"/>
</dbReference>
<dbReference type="Gene3D" id="3.40.50.300">
    <property type="entry name" value="P-loop containing nucleotide triphosphate hydrolases"/>
    <property type="match status" value="1"/>
</dbReference>
<dbReference type="Gene3D" id="1.10.10.10">
    <property type="entry name" value="Winged helix-like DNA-binding domain superfamily/Winged helix DNA-binding domain"/>
    <property type="match status" value="1"/>
</dbReference>
<dbReference type="HAMAP" id="MF_00016">
    <property type="entry name" value="DNA_HJ_migration_RuvB"/>
    <property type="match status" value="1"/>
</dbReference>
<dbReference type="InterPro" id="IPR003593">
    <property type="entry name" value="AAA+_ATPase"/>
</dbReference>
<dbReference type="InterPro" id="IPR041445">
    <property type="entry name" value="AAA_lid_4"/>
</dbReference>
<dbReference type="InterPro" id="IPR004605">
    <property type="entry name" value="DNA_helicase_Holl-junc_RuvB"/>
</dbReference>
<dbReference type="InterPro" id="IPR027417">
    <property type="entry name" value="P-loop_NTPase"/>
</dbReference>
<dbReference type="InterPro" id="IPR008824">
    <property type="entry name" value="RuvB-like_N"/>
</dbReference>
<dbReference type="InterPro" id="IPR008823">
    <property type="entry name" value="RuvB_C"/>
</dbReference>
<dbReference type="InterPro" id="IPR036388">
    <property type="entry name" value="WH-like_DNA-bd_sf"/>
</dbReference>
<dbReference type="InterPro" id="IPR036390">
    <property type="entry name" value="WH_DNA-bd_sf"/>
</dbReference>
<dbReference type="NCBIfam" id="NF000868">
    <property type="entry name" value="PRK00080.1"/>
    <property type="match status" value="1"/>
</dbReference>
<dbReference type="NCBIfam" id="TIGR00635">
    <property type="entry name" value="ruvB"/>
    <property type="match status" value="1"/>
</dbReference>
<dbReference type="PANTHER" id="PTHR42848">
    <property type="match status" value="1"/>
</dbReference>
<dbReference type="PANTHER" id="PTHR42848:SF1">
    <property type="entry name" value="HOLLIDAY JUNCTION BRANCH MIGRATION COMPLEX SUBUNIT RUVB"/>
    <property type="match status" value="1"/>
</dbReference>
<dbReference type="Pfam" id="PF17864">
    <property type="entry name" value="AAA_lid_4"/>
    <property type="match status" value="1"/>
</dbReference>
<dbReference type="Pfam" id="PF05491">
    <property type="entry name" value="RuvB_C"/>
    <property type="match status" value="1"/>
</dbReference>
<dbReference type="Pfam" id="PF05496">
    <property type="entry name" value="RuvB_N"/>
    <property type="match status" value="1"/>
</dbReference>
<dbReference type="SMART" id="SM00382">
    <property type="entry name" value="AAA"/>
    <property type="match status" value="1"/>
</dbReference>
<dbReference type="SUPFAM" id="SSF52540">
    <property type="entry name" value="P-loop containing nucleoside triphosphate hydrolases"/>
    <property type="match status" value="1"/>
</dbReference>
<dbReference type="SUPFAM" id="SSF46785">
    <property type="entry name" value="Winged helix' DNA-binding domain"/>
    <property type="match status" value="1"/>
</dbReference>
<keyword id="KW-0067">ATP-binding</keyword>
<keyword id="KW-0963">Cytoplasm</keyword>
<keyword id="KW-0227">DNA damage</keyword>
<keyword id="KW-0233">DNA recombination</keyword>
<keyword id="KW-0234">DNA repair</keyword>
<keyword id="KW-0238">DNA-binding</keyword>
<keyword id="KW-0378">Hydrolase</keyword>
<keyword id="KW-0547">Nucleotide-binding</keyword>
<evidence type="ECO:0000255" key="1">
    <source>
        <dbReference type="HAMAP-Rule" id="MF_00016"/>
    </source>
</evidence>
<name>RUVB_LEGPA</name>
<comment type="function">
    <text evidence="1">The RuvA-RuvB-RuvC complex processes Holliday junction (HJ) DNA during genetic recombination and DNA repair, while the RuvA-RuvB complex plays an important role in the rescue of blocked DNA replication forks via replication fork reversal (RFR). RuvA specifically binds to HJ cruciform DNA, conferring on it an open structure. The RuvB hexamer acts as an ATP-dependent pump, pulling dsDNA into and through the RuvAB complex. RuvB forms 2 homohexamers on either side of HJ DNA bound by 1 or 2 RuvA tetramers; 4 subunits per hexamer contact DNA at a time. Coordinated motions by a converter formed by DNA-disengaged RuvB subunits stimulates ATP hydrolysis and nucleotide exchange. Immobilization of the converter enables RuvB to convert the ATP-contained energy into a lever motion, pulling 2 nucleotides of DNA out of the RuvA tetramer per ATP hydrolyzed, thus driving DNA branch migration. The RuvB motors rotate together with the DNA substrate, which together with the progressing nucleotide cycle form the mechanistic basis for DNA recombination by continuous HJ branch migration. Branch migration allows RuvC to scan DNA until it finds its consensus sequence, where it cleaves and resolves cruciform DNA.</text>
</comment>
<comment type="catalytic activity">
    <reaction evidence="1">
        <text>ATP + H2O = ADP + phosphate + H(+)</text>
        <dbReference type="Rhea" id="RHEA:13065"/>
        <dbReference type="ChEBI" id="CHEBI:15377"/>
        <dbReference type="ChEBI" id="CHEBI:15378"/>
        <dbReference type="ChEBI" id="CHEBI:30616"/>
        <dbReference type="ChEBI" id="CHEBI:43474"/>
        <dbReference type="ChEBI" id="CHEBI:456216"/>
    </reaction>
</comment>
<comment type="subunit">
    <text evidence="1">Homohexamer. Forms an RuvA(8)-RuvB(12)-Holliday junction (HJ) complex. HJ DNA is sandwiched between 2 RuvA tetramers; dsDNA enters through RuvA and exits via RuvB. An RuvB hexamer assembles on each DNA strand where it exits the tetramer. Each RuvB hexamer is contacted by two RuvA subunits (via domain III) on 2 adjacent RuvB subunits; this complex drives branch migration. In the full resolvosome a probable DNA-RuvA(4)-RuvB(12)-RuvC(2) complex forms which resolves the HJ.</text>
</comment>
<comment type="subcellular location">
    <subcellularLocation>
        <location evidence="1">Cytoplasm</location>
    </subcellularLocation>
</comment>
<comment type="domain">
    <text evidence="1">Has 3 domains, the large (RuvB-L) and small ATPase (RuvB-S) domains and the C-terminal head (RuvB-H) domain. The head domain binds DNA, while the ATPase domains jointly bind ATP, ADP or are empty depending on the state of the subunit in the translocation cycle. During a single DNA translocation step the structure of each domain remains the same, but their relative positions change.</text>
</comment>
<comment type="similarity">
    <text evidence="1">Belongs to the RuvB family.</text>
</comment>
<sequence>MLESDRLISSQSIVSEDAMDRAIRPLSLSEYVGQDSVSSQMQIFINAARKRNDPLDHVLIFGPPGLGKTTLANIIAHEMGVNIRQTSGPVIERAGDIAAILTNLQQNDVLFIDEIHRLSPVIEEILYPAMEDYKLDIMIGEGPAARSIKLELPPFTLIGATTRAGLLTSPLRDRFGIVQRLEYYSVDSLTKIVARSAHLLGVPTKPEGAREIALRSRGTPRIANRLLRRVRDYSEVKGNGIITVDMAQQALEMLEVDQHGFDLMDRKLLLAVIEHFNGGPVGIDSIAAAIGEEKGTIEDVLEPFLIQQGFLMRTPRGRIATSKAYQHFGFSAIEQE</sequence>
<proteinExistence type="inferred from homology"/>
<reference key="1">
    <citation type="journal article" date="2004" name="Nat. Genet.">
        <title>Evidence in the Legionella pneumophila genome for exploitation of host cell functions and high genome plasticity.</title>
        <authorList>
            <person name="Cazalet C."/>
            <person name="Rusniok C."/>
            <person name="Brueggemann H."/>
            <person name="Zidane N."/>
            <person name="Magnier A."/>
            <person name="Ma L."/>
            <person name="Tichit M."/>
            <person name="Jarraud S."/>
            <person name="Bouchier C."/>
            <person name="Vandenesch F."/>
            <person name="Kunst F."/>
            <person name="Etienne J."/>
            <person name="Glaser P."/>
            <person name="Buchrieser C."/>
        </authorList>
    </citation>
    <scope>NUCLEOTIDE SEQUENCE [LARGE SCALE GENOMIC DNA]</scope>
    <source>
        <strain>Paris</strain>
    </source>
</reference>